<name>OXLA_CALRH</name>
<dbReference type="EC" id="1.4.3.2" evidence="3 6"/>
<dbReference type="EMBL" id="AJ271725">
    <property type="protein sequence ID" value="CAB71136.1"/>
    <property type="molecule type" value="mRNA"/>
</dbReference>
<dbReference type="PDB" id="1F8R">
    <property type="method" value="X-ray"/>
    <property type="resolution" value="2.00 A"/>
    <property type="chains" value="A/B/C/D=19-516"/>
</dbReference>
<dbReference type="PDB" id="1F8S">
    <property type="method" value="X-ray"/>
    <property type="resolution" value="2.00 A"/>
    <property type="chains" value="A/B/C/D/E/F/G/H=19-516"/>
</dbReference>
<dbReference type="PDB" id="2IID">
    <property type="method" value="X-ray"/>
    <property type="resolution" value="1.80 A"/>
    <property type="chains" value="A/B/C/D=19-516"/>
</dbReference>
<dbReference type="PDBsum" id="1F8R"/>
<dbReference type="PDBsum" id="1F8S"/>
<dbReference type="PDBsum" id="2IID"/>
<dbReference type="SMR" id="P81382"/>
<dbReference type="GlyConnect" id="322">
    <property type="glycosylation" value="4 N-Linked glycans"/>
</dbReference>
<dbReference type="iPTMnet" id="P81382"/>
<dbReference type="BRENDA" id="1.4.3.2">
    <property type="organism ID" value="198"/>
</dbReference>
<dbReference type="SABIO-RK" id="P81382"/>
<dbReference type="EvolutionaryTrace" id="P81382"/>
<dbReference type="GO" id="GO:0005576">
    <property type="term" value="C:extracellular region"/>
    <property type="evidence" value="ECO:0007669"/>
    <property type="project" value="UniProtKB-SubCell"/>
</dbReference>
<dbReference type="GO" id="GO:0106329">
    <property type="term" value="F:L-phenylalaine oxidase activity"/>
    <property type="evidence" value="ECO:0007669"/>
    <property type="project" value="RHEA"/>
</dbReference>
<dbReference type="GO" id="GO:0090729">
    <property type="term" value="F:toxin activity"/>
    <property type="evidence" value="ECO:0007669"/>
    <property type="project" value="UniProtKB-KW"/>
</dbReference>
<dbReference type="GO" id="GO:0009063">
    <property type="term" value="P:amino acid catabolic process"/>
    <property type="evidence" value="ECO:0007669"/>
    <property type="project" value="TreeGrafter"/>
</dbReference>
<dbReference type="GO" id="GO:0006915">
    <property type="term" value="P:apoptotic process"/>
    <property type="evidence" value="ECO:0007669"/>
    <property type="project" value="UniProtKB-KW"/>
</dbReference>
<dbReference type="GO" id="GO:0042742">
    <property type="term" value="P:defense response to bacterium"/>
    <property type="evidence" value="ECO:0007669"/>
    <property type="project" value="UniProtKB-KW"/>
</dbReference>
<dbReference type="GO" id="GO:0031640">
    <property type="term" value="P:killing of cells of another organism"/>
    <property type="evidence" value="ECO:0007669"/>
    <property type="project" value="UniProtKB-KW"/>
</dbReference>
<dbReference type="FunFam" id="1.10.405.10:FF:000004">
    <property type="entry name" value="Amine oxidase"/>
    <property type="match status" value="1"/>
</dbReference>
<dbReference type="FunFam" id="3.50.50.60:FF:000450">
    <property type="entry name" value="Amine oxidase"/>
    <property type="match status" value="1"/>
</dbReference>
<dbReference type="Gene3D" id="3.90.660.10">
    <property type="match status" value="1"/>
</dbReference>
<dbReference type="Gene3D" id="3.50.50.60">
    <property type="entry name" value="FAD/NAD(P)-binding domain"/>
    <property type="match status" value="1"/>
</dbReference>
<dbReference type="Gene3D" id="1.10.405.10">
    <property type="entry name" value="Guanine Nucleotide Dissociation Inhibitor, domain 1"/>
    <property type="match status" value="1"/>
</dbReference>
<dbReference type="InterPro" id="IPR002937">
    <property type="entry name" value="Amino_oxidase"/>
</dbReference>
<dbReference type="InterPro" id="IPR036188">
    <property type="entry name" value="FAD/NAD-bd_sf"/>
</dbReference>
<dbReference type="InterPro" id="IPR050281">
    <property type="entry name" value="Flavin_monoamine_oxidase"/>
</dbReference>
<dbReference type="PANTHER" id="PTHR10742:SF355">
    <property type="entry name" value="AMINE OXIDASE"/>
    <property type="match status" value="1"/>
</dbReference>
<dbReference type="PANTHER" id="PTHR10742">
    <property type="entry name" value="FLAVIN MONOAMINE OXIDASE"/>
    <property type="match status" value="1"/>
</dbReference>
<dbReference type="Pfam" id="PF01593">
    <property type="entry name" value="Amino_oxidase"/>
    <property type="match status" value="1"/>
</dbReference>
<dbReference type="SUPFAM" id="SSF54373">
    <property type="entry name" value="FAD-linked reductases, C-terminal domain"/>
    <property type="match status" value="1"/>
</dbReference>
<dbReference type="SUPFAM" id="SSF51905">
    <property type="entry name" value="FAD/NAD(P)-binding domain"/>
    <property type="match status" value="1"/>
</dbReference>
<evidence type="ECO:0000250" key="1"/>
<evidence type="ECO:0000269" key="2">
    <source>
    </source>
</evidence>
<evidence type="ECO:0000269" key="3">
    <source>
    </source>
</evidence>
<evidence type="ECO:0000269" key="4">
    <source>
    </source>
</evidence>
<evidence type="ECO:0000269" key="5">
    <source>
    </source>
</evidence>
<evidence type="ECO:0000269" key="6">
    <source>
    </source>
</evidence>
<evidence type="ECO:0000303" key="7">
    <source>
    </source>
</evidence>
<evidence type="ECO:0000305" key="8"/>
<evidence type="ECO:0000305" key="9">
    <source>
    </source>
</evidence>
<evidence type="ECO:0000305" key="10">
    <source>
    </source>
</evidence>
<evidence type="ECO:0000305" key="11">
    <source>
    </source>
</evidence>
<evidence type="ECO:0000312" key="12">
    <source>
        <dbReference type="PDB" id="1F8R"/>
    </source>
</evidence>
<evidence type="ECO:0000312" key="13">
    <source>
        <dbReference type="PDB" id="1F8S"/>
    </source>
</evidence>
<evidence type="ECO:0000312" key="14">
    <source>
        <dbReference type="PDB" id="2IID"/>
    </source>
</evidence>
<evidence type="ECO:0007744" key="15">
    <source>
        <dbReference type="PDB" id="1F8R"/>
    </source>
</evidence>
<evidence type="ECO:0007744" key="16">
    <source>
        <dbReference type="PDB" id="1F8S"/>
    </source>
</evidence>
<evidence type="ECO:0007744" key="17">
    <source>
        <dbReference type="PDB" id="2IID"/>
    </source>
</evidence>
<evidence type="ECO:0007829" key="18">
    <source>
        <dbReference type="PDB" id="1F8R"/>
    </source>
</evidence>
<evidence type="ECO:0007829" key="19">
    <source>
        <dbReference type="PDB" id="2IID"/>
    </source>
</evidence>
<accession>P81382</accession>
<accession>Q9I849</accession>
<keyword id="KW-0002">3D-structure</keyword>
<keyword id="KW-0044">Antibiotic</keyword>
<keyword id="KW-0929">Antimicrobial</keyword>
<keyword id="KW-0053">Apoptosis</keyword>
<keyword id="KW-0204">Cytolysis</keyword>
<keyword id="KW-0903">Direct protein sequencing</keyword>
<keyword id="KW-1015">Disulfide bond</keyword>
<keyword id="KW-0274">FAD</keyword>
<keyword id="KW-0285">Flavoprotein</keyword>
<keyword id="KW-0325">Glycoprotein</keyword>
<keyword id="KW-1199">Hemostasis impairing toxin</keyword>
<keyword id="KW-0560">Oxidoreductase</keyword>
<keyword id="KW-1201">Platelet aggregation inhibiting toxin</keyword>
<keyword id="KW-0964">Secreted</keyword>
<keyword id="KW-0732">Signal</keyword>
<keyword id="KW-0800">Toxin</keyword>
<protein>
    <recommendedName>
        <fullName evidence="7">L-amino-acid oxidase</fullName>
        <shortName>LAO</shortName>
        <shortName evidence="7">MPV-LAAO</shortName>
        <ecNumber evidence="3 6">1.4.3.2</ecNumber>
    </recommendedName>
</protein>
<reference key="1">
    <citation type="journal article" date="2001" name="Eur. J. Biochem.">
        <title>L-amino-acid oxidase from Malayan pit viper Calloselasma rhodostoma: comparative sequence analysis and characterization of active and inactive forms of the enzyme.</title>
        <authorList>
            <person name="Macheroux P."/>
            <person name="Seth O."/>
            <person name="Bollschweiler C."/>
            <person name="Schwarz M."/>
            <person name="Kurfuerst M."/>
            <person name="Au L.-C."/>
            <person name="Ghisla S."/>
        </authorList>
    </citation>
    <scope>NUCLEOTIDE SEQUENCE [MRNA]</scope>
    <scope>PROTEIN SEQUENCE OF 19-33</scope>
    <scope>FUNCTION</scope>
    <scope>CATALYTIC ACTIVITY</scope>
    <scope>BIOPHYSICOCHEMICAL PROPERTIES</scope>
    <source>
        <tissue>Venom</tissue>
        <tissue>Venom gland</tissue>
    </source>
</reference>
<reference key="2">
    <citation type="journal article" date="1994" name="Arch. Biochem. Biophys.">
        <title>Purification and properties of the L-amino acid oxidase from Malayan pit viper (Calloselasma rhodostoma) venom.</title>
        <authorList>
            <person name="Ponnudurai G."/>
            <person name="Chung M.C.M."/>
            <person name="Tan N.-H."/>
        </authorList>
    </citation>
    <scope>PROTEIN SEQUENCE OF 19-38</scope>
    <scope>SUBUNIT</scope>
    <scope>SUBCELLULAR LOCATION</scope>
    <scope>FUNCTION</scope>
    <scope>CATALYTIC ACTIVITY</scope>
    <scope>BIOPHYSICOCHEMICAL PROPERTIES</scope>
    <scope>SUBSTRATE SPECIFICITY</scope>
    <source>
        <tissue>Venom</tissue>
    </source>
</reference>
<reference key="3">
    <citation type="journal article" date="2001" name="Eur. J. Biochem.">
        <title>Structure and characterization of the glycan moiety of L-amino-acid oxidase from the Malayan pit viper Calloselasma rhodostoma.</title>
        <authorList>
            <person name="Geyer A."/>
            <person name="Fitzpatrick T.B."/>
            <person name="Pawelek P.D."/>
            <person name="Kitzing K."/>
            <person name="Vrielink A."/>
            <person name="Ghisla S."/>
            <person name="Macheroux P."/>
        </authorList>
    </citation>
    <scope>GLYCOSYLATION AT ASN-190 AND ASN-379</scope>
    <scope>MASS SPECTROMETRY</scope>
</reference>
<reference key="4">
    <citation type="journal article" date="2007" name="Protein Expr. Purif.">
        <title>Molecular cloning, expression and purification of L-amino acid oxidase from the Malayan pit viper Calloselasma rhodostoma.</title>
        <authorList>
            <person name="Kommoju P.R."/>
            <person name="Macheroux P."/>
            <person name="Ghisla S."/>
        </authorList>
    </citation>
    <scope>EXPRESSION OF ACTIVE RECOMBINANT LAAO</scope>
</reference>
<reference evidence="12 13" key="5">
    <citation type="journal article" date="2000" name="EMBO J.">
        <title>The structure of L-amino acid oxidase reveals the substrate trajectory into an enantiomerically conserved active site.</title>
        <authorList>
            <person name="Pawelek P.D."/>
            <person name="Cheah J."/>
            <person name="Coulombe R."/>
            <person name="Macheroux P."/>
            <person name="Ghisla S."/>
            <person name="Vrielink A."/>
        </authorList>
    </citation>
    <scope>X-RAY CRYSTALLOGRAPHY (2.0 ANGSTROMS) OF 19-516 IN COMPLEX WITH FAD</scope>
    <scope>DISULFIDE BONDS</scope>
    <scope>GLYCOSYLATION AT ASN-190 AND ASN-379</scope>
    <source>
        <tissue>Venom</tissue>
    </source>
</reference>
<reference evidence="14" key="6">
    <citation type="journal article" date="2006" name="J. Mol. Biol.">
        <title>Crystal structure of LAAO from Calloselasma rhodostoma with an L-phenylalanine substrate: insights into structure and mechanism.</title>
        <authorList>
            <person name="Moustafa I.M."/>
            <person name="Foster S."/>
            <person name="Lyubimov A.Y."/>
            <person name="Vrielink A."/>
        </authorList>
    </citation>
    <scope>X-RAY CRYSTALLOGRAPHY (1.8 ANGSTROMS) OF 19-516 IN COMPLEX WITH FAD AND SUBSTRATE L-PHE</scope>
    <scope>GLYCOSYLATION AT ASN-190 AND ASN-379</scope>
    <source>
        <tissue>Venom</tissue>
    </source>
</reference>
<comment type="function">
    <text evidence="1 3 6 10">Catalyzes an oxidative deamination of predominantly hydrophobic and aromatic L-amino acids, thus producing hydrogen peroxide that may contribute to the diverse toxic effects of this enzyme (PubMed:11248687, PubMed:8080286). Shows high affinity for L-Phe, L-Trp, L-Met, L-Leu, and L-Ile, moderate affinity for L-Arg, L-Asp, and L-His, and very low affinity for L-Gln, L-Lys, and L-Ala (PubMed:8080286). Also shows high activity on L-norleucine (L-2-aminohexanoate), and L-norvaline (L-2-aminopentanoate) and a weak activity on L-ornithine and L-aminobutyric acid (PubMed:8080286). Also exhibits diverse biological activities, such as hemorrhage, hemolysis, edema, apoptosis of vascular endothelial cells or tumor cell lines, and antiparasitic activities, as well as regulation of platelet aggregation (By similarity). Its effect on platelets is controversial, since it either induces aggregation or inhibits agonist-induced aggregation. These different effects are probably due to different experimental conditions (By similarity). A possible explanation of high efficacy it that LAAO may bind to target cells through its sialylated glycan moiety that would bind to sialic acid-binding lectins (siglec) on target cells (PubMed:11453999). This interaction may result in production of locally high concentrations of hydrogen peroxide in or near the binding interface, leading, in turn to oxidative damage of the siglec or another adjacent cell structural elements (PubMed:11453999).</text>
</comment>
<comment type="catalytic activity">
    <reaction evidence="3 6">
        <text>an L-alpha-amino acid + O2 + H2O = a 2-oxocarboxylate + H2O2 + NH4(+)</text>
        <dbReference type="Rhea" id="RHEA:13781"/>
        <dbReference type="ChEBI" id="CHEBI:15377"/>
        <dbReference type="ChEBI" id="CHEBI:15379"/>
        <dbReference type="ChEBI" id="CHEBI:16240"/>
        <dbReference type="ChEBI" id="CHEBI:28938"/>
        <dbReference type="ChEBI" id="CHEBI:35179"/>
        <dbReference type="ChEBI" id="CHEBI:59869"/>
        <dbReference type="EC" id="1.4.3.2"/>
    </reaction>
</comment>
<comment type="catalytic activity">
    <reaction evidence="3 6">
        <text>L-leucine + O2 + H2O = 4-methyl-2-oxopentanoate + H2O2 + NH4(+)</text>
        <dbReference type="Rhea" id="RHEA:60996"/>
        <dbReference type="ChEBI" id="CHEBI:15377"/>
        <dbReference type="ChEBI" id="CHEBI:15379"/>
        <dbReference type="ChEBI" id="CHEBI:16240"/>
        <dbReference type="ChEBI" id="CHEBI:17865"/>
        <dbReference type="ChEBI" id="CHEBI:28938"/>
        <dbReference type="ChEBI" id="CHEBI:57427"/>
    </reaction>
</comment>
<comment type="catalytic activity">
    <reaction evidence="6">
        <text>L-phenylalanine + O2 + H2O = 3-phenylpyruvate + H2O2 + NH4(+)</text>
        <dbReference type="Rhea" id="RHEA:61240"/>
        <dbReference type="ChEBI" id="CHEBI:15377"/>
        <dbReference type="ChEBI" id="CHEBI:15379"/>
        <dbReference type="ChEBI" id="CHEBI:16240"/>
        <dbReference type="ChEBI" id="CHEBI:18005"/>
        <dbReference type="ChEBI" id="CHEBI:28938"/>
        <dbReference type="ChEBI" id="CHEBI:58095"/>
    </reaction>
</comment>
<comment type="catalytic activity">
    <reaction evidence="6">
        <text>L-tryptophan + O2 + H2O = indole-3-pyruvate + H2O2 + NH4(+)</text>
        <dbReference type="Rhea" id="RHEA:61244"/>
        <dbReference type="ChEBI" id="CHEBI:15377"/>
        <dbReference type="ChEBI" id="CHEBI:15379"/>
        <dbReference type="ChEBI" id="CHEBI:16240"/>
        <dbReference type="ChEBI" id="CHEBI:17640"/>
        <dbReference type="ChEBI" id="CHEBI:28938"/>
        <dbReference type="ChEBI" id="CHEBI:57912"/>
    </reaction>
</comment>
<comment type="catalytic activity">
    <reaction evidence="6">
        <text>L-methionine + O2 + H2O = 4-methylsulfanyl-2-oxobutanoate + H2O2 + NH4(+)</text>
        <dbReference type="Rhea" id="RHEA:61236"/>
        <dbReference type="ChEBI" id="CHEBI:15377"/>
        <dbReference type="ChEBI" id="CHEBI:15379"/>
        <dbReference type="ChEBI" id="CHEBI:16240"/>
        <dbReference type="ChEBI" id="CHEBI:16723"/>
        <dbReference type="ChEBI" id="CHEBI:28938"/>
        <dbReference type="ChEBI" id="CHEBI:57844"/>
    </reaction>
</comment>
<comment type="catalytic activity">
    <reaction evidence="6">
        <text>L-isoleucine + O2 + H2O = (S)-3-methyl-2-oxopentanoate + H2O2 + NH4(+)</text>
        <dbReference type="Rhea" id="RHEA:61232"/>
        <dbReference type="ChEBI" id="CHEBI:15377"/>
        <dbReference type="ChEBI" id="CHEBI:15379"/>
        <dbReference type="ChEBI" id="CHEBI:16240"/>
        <dbReference type="ChEBI" id="CHEBI:28938"/>
        <dbReference type="ChEBI" id="CHEBI:35146"/>
        <dbReference type="ChEBI" id="CHEBI:58045"/>
    </reaction>
</comment>
<comment type="catalytic activity">
    <reaction evidence="6">
        <text>L-arginine + O2 + H2O = 5-guanidino-2-oxopentanoate + H2O2 + NH4(+)</text>
        <dbReference type="Rhea" id="RHEA:51404"/>
        <dbReference type="ChEBI" id="CHEBI:15377"/>
        <dbReference type="ChEBI" id="CHEBI:15379"/>
        <dbReference type="ChEBI" id="CHEBI:16240"/>
        <dbReference type="ChEBI" id="CHEBI:28938"/>
        <dbReference type="ChEBI" id="CHEBI:32682"/>
        <dbReference type="ChEBI" id="CHEBI:58489"/>
    </reaction>
</comment>
<comment type="catalytic activity">
    <reaction evidence="6">
        <text>L-aspartate + O2 + H2O = oxaloacetate + H2O2 + NH4(+)</text>
        <dbReference type="Rhea" id="RHEA:19025"/>
        <dbReference type="ChEBI" id="CHEBI:15377"/>
        <dbReference type="ChEBI" id="CHEBI:15379"/>
        <dbReference type="ChEBI" id="CHEBI:16240"/>
        <dbReference type="ChEBI" id="CHEBI:16452"/>
        <dbReference type="ChEBI" id="CHEBI:28938"/>
        <dbReference type="ChEBI" id="CHEBI:29991"/>
    </reaction>
</comment>
<comment type="catalytic activity">
    <reaction evidence="6">
        <text>L-histidine + O2 + H2O = 3-(imidazol-5-yl)pyruvate + H2O2 + NH4(+)</text>
        <dbReference type="Rhea" id="RHEA:61228"/>
        <dbReference type="ChEBI" id="CHEBI:15377"/>
        <dbReference type="ChEBI" id="CHEBI:15379"/>
        <dbReference type="ChEBI" id="CHEBI:16240"/>
        <dbReference type="ChEBI" id="CHEBI:28938"/>
        <dbReference type="ChEBI" id="CHEBI:57595"/>
        <dbReference type="ChEBI" id="CHEBI:58133"/>
    </reaction>
</comment>
<comment type="catalytic activity">
    <reaction evidence="6">
        <text>L-2-aminohexanoate + O2 + H2O = 2-oxohexanoate + H2O2 + NH4(+)</text>
        <dbReference type="Rhea" id="RHEA:61268"/>
        <dbReference type="ChEBI" id="CHEBI:15377"/>
        <dbReference type="ChEBI" id="CHEBI:15379"/>
        <dbReference type="ChEBI" id="CHEBI:16240"/>
        <dbReference type="ChEBI" id="CHEBI:28938"/>
        <dbReference type="ChEBI" id="CHEBI:35177"/>
        <dbReference type="ChEBI" id="CHEBI:58455"/>
    </reaction>
</comment>
<comment type="catalytic activity">
    <reaction evidence="6">
        <text>L-2-aminopentanoate + O2 + H2O = 2-oxopentanoate + H2O2 + NH4(+)</text>
        <dbReference type="Rhea" id="RHEA:61272"/>
        <dbReference type="ChEBI" id="CHEBI:15377"/>
        <dbReference type="ChEBI" id="CHEBI:15379"/>
        <dbReference type="ChEBI" id="CHEBI:16240"/>
        <dbReference type="ChEBI" id="CHEBI:28644"/>
        <dbReference type="ChEBI" id="CHEBI:28938"/>
        <dbReference type="ChEBI" id="CHEBI:58441"/>
    </reaction>
</comment>
<comment type="cofactor">
    <cofactor evidence="2 5">
        <name>FAD</name>
        <dbReference type="ChEBI" id="CHEBI:57692"/>
    </cofactor>
</comment>
<comment type="biophysicochemical properties">
    <kinetics>
        <KM evidence="6">0.05 mM for L-Phe</KM>
        <KM evidence="6">0.08 mM for L-Trp</KM>
        <KM evidence="6">0.13 mM for L-norleucine (L-2-aminohexanoate)</KM>
        <KM evidence="6">0.24 mM for L-Met</KM>
        <KM evidence="3">0.56 mM for L-Leu</KM>
        <KM evidence="6">0.63 mM for L-Leu</KM>
        <KM evidence="6">0.8 mM for L-Ile</KM>
        <KM evidence="6">0.91 mM for L-norvaline (L-2-aminopentanoate)</KM>
        <KM evidence="6">2 mM for L-Arg</KM>
        <KM evidence="6">2.5 mM for L-Asn</KM>
        <KM evidence="6">2.5 mM for L-His</KM>
        <KM evidence="6">5 mM for L-aminobutyric acid</KM>
        <KM evidence="6">8 mM for L-Gln</KM>
        <KM evidence="6">10 mM for L-Lys</KM>
        <KM evidence="6">12.5 mM for L-Ala</KM>
        <KM evidence="6">13.3 mM for L-ornithine</KM>
    </kinetics>
    <phDependence>
        <text>Optimum pH is 9.0.</text>
    </phDependence>
    <temperatureDependence>
        <text>Thermostable.</text>
    </temperatureDependence>
</comment>
<comment type="subunit">
    <text evidence="2 5 6">Homodimer; non-covalently linked.</text>
</comment>
<comment type="subcellular location">
    <subcellularLocation>
        <location evidence="6">Secreted</location>
    </subcellularLocation>
</comment>
<comment type="tissue specificity">
    <text evidence="11">Expressed by the venom gland.</text>
</comment>
<comment type="PTM">
    <text evidence="4">N-glycosylated at Asn-190 and Asn-379 with bis-sialylated, biantennary, core-fucosylated dodecasaccharide (composed of N-acetylglucosamine, fucose, mannose, galactose, and sialic acid residues).</text>
</comment>
<comment type="mass spectrometry"/>
<comment type="similarity">
    <text evidence="8">Belongs to the flavin monoamine oxidase family. FIG1 subfamily.</text>
</comment>
<sequence>MNVFFMFSLLFLAALGSCADDRNPLAECFQENDYEEFLEIARNGLKATSNPKHVVIVGAGMAGLSAAYVLAGAGHQVTVLEASERPGGRVRTYRNEEAGWYANLGPMRLPEKHRIVREYIRKFDLRLNEFSQENDNAWYFIKNIRKKVGEVKKDPGLLKYPVKPSEAGKSAGQLYEESLGKVVEELKRTNCSYILNKYDTYSTKEYLIKEGDLSPGAVDMIGDLLNEDSGYYVSFIESLKHDDIFAYEKRFDEIVDGMDKLPTAMYRDIQDKVHFNAQVIKIQQNDQKVTVVYETLSKETPSVTADYVIVCTTSRAVRLIKFNPPLLPKKAHALRSVHYRSGTKIFLTCTTKFWEDDGIHGGKSTTDLPSRFIYYPNHNFTNGVGVIIAYGIGDDANFFQALDFKDCADIVFNDLSLIHQLPKKDIQSFCYPSVIQKWSLDKYAMGGITTFTPYQFQHFSDPLTASQGRIYFAGEYTAQAHGWIDSTIKSGLRAARDVNLASENPSGIHLSNDNEL</sequence>
<feature type="signal peptide" evidence="3 6">
    <location>
        <begin position="1"/>
        <end position="18"/>
    </location>
</feature>
<feature type="chain" id="PRO_0000001707" description="L-amino-acid oxidase" evidence="9 11">
    <location>
        <begin position="19"/>
        <end position="516"/>
    </location>
</feature>
<feature type="binding site" evidence="2 5">
    <location>
        <begin position="61"/>
        <end position="62"/>
    </location>
    <ligand>
        <name>FAD</name>
        <dbReference type="ChEBI" id="CHEBI:57692"/>
    </ligand>
</feature>
<feature type="binding site" evidence="2 5">
    <location>
        <begin position="81"/>
        <end position="82"/>
    </location>
    <ligand>
        <name>FAD</name>
        <dbReference type="ChEBI" id="CHEBI:57692"/>
    </ligand>
</feature>
<feature type="binding site" evidence="2 5">
    <location>
        <position position="89"/>
    </location>
    <ligand>
        <name>FAD</name>
        <dbReference type="ChEBI" id="CHEBI:57692"/>
    </ligand>
</feature>
<feature type="binding site" evidence="2 5">
    <location>
        <begin position="105"/>
        <end position="108"/>
    </location>
    <ligand>
        <name>FAD</name>
        <dbReference type="ChEBI" id="CHEBI:57692"/>
    </ligand>
</feature>
<feature type="binding site" evidence="5 15 16 17">
    <location>
        <position position="108"/>
    </location>
    <ligand>
        <name>substrate</name>
    </ligand>
</feature>
<feature type="binding site" evidence="5 15 16 17">
    <location>
        <position position="241"/>
    </location>
    <ligand>
        <name>substrate</name>
    </ligand>
</feature>
<feature type="binding site" evidence="2 5">
    <location>
        <position position="279"/>
    </location>
    <ligand>
        <name>FAD</name>
        <dbReference type="ChEBI" id="CHEBI:57692"/>
    </ligand>
</feature>
<feature type="binding site" evidence="5 15 16 17">
    <location>
        <position position="390"/>
    </location>
    <ligand>
        <name>substrate</name>
    </ligand>
</feature>
<feature type="binding site" evidence="2 5">
    <location>
        <position position="475"/>
    </location>
    <ligand>
        <name>FAD</name>
        <dbReference type="ChEBI" id="CHEBI:57692"/>
    </ligand>
</feature>
<feature type="binding site" evidence="2 5">
    <location>
        <begin position="482"/>
        <end position="487"/>
    </location>
    <ligand>
        <name>FAD</name>
        <dbReference type="ChEBI" id="CHEBI:57692"/>
    </ligand>
</feature>
<feature type="binding site" evidence="5 16 17">
    <location>
        <begin position="482"/>
        <end position="483"/>
    </location>
    <ligand>
        <name>substrate</name>
    </ligand>
</feature>
<feature type="glycosylation site" description="N-linked (GlcNAc...) (complex) asparagine" evidence="2 4">
    <location>
        <position position="190"/>
    </location>
</feature>
<feature type="glycosylation site" description="N-linked (GlcNAc...) (complex) asparagine" evidence="2 4">
    <location>
        <position position="379"/>
    </location>
</feature>
<feature type="disulfide bond" evidence="2">
    <location>
        <begin position="28"/>
        <end position="191"/>
    </location>
</feature>
<feature type="disulfide bond" evidence="2">
    <location>
        <begin position="349"/>
        <end position="430"/>
    </location>
</feature>
<feature type="sequence conflict" description="In Ref. 2; AA sequence." evidence="8" ref="2">
    <original>C</original>
    <variation>E</variation>
    <location>
        <position position="28"/>
    </location>
</feature>
<feature type="sequence conflict" description="In Ref. 2; AA sequence." evidence="8" ref="2">
    <original>D</original>
    <variation>N</variation>
    <location>
        <position position="33"/>
    </location>
</feature>
<feature type="helix" evidence="19">
    <location>
        <begin position="26"/>
        <end position="29"/>
    </location>
</feature>
<feature type="helix" evidence="19">
    <location>
        <begin position="34"/>
        <end position="43"/>
    </location>
</feature>
<feature type="strand" evidence="19">
    <location>
        <begin position="53"/>
        <end position="57"/>
    </location>
</feature>
<feature type="helix" evidence="19">
    <location>
        <begin position="61"/>
        <end position="73"/>
    </location>
</feature>
<feature type="strand" evidence="19">
    <location>
        <begin position="76"/>
        <end position="80"/>
    </location>
</feature>
<feature type="strand" evidence="19">
    <location>
        <begin position="82"/>
        <end position="87"/>
    </location>
</feature>
<feature type="strand" evidence="19">
    <location>
        <begin position="92"/>
        <end position="95"/>
    </location>
</feature>
<feature type="turn" evidence="19">
    <location>
        <begin position="96"/>
        <end position="99"/>
    </location>
</feature>
<feature type="strand" evidence="19">
    <location>
        <begin position="100"/>
        <end position="105"/>
    </location>
</feature>
<feature type="helix" evidence="19">
    <location>
        <begin position="114"/>
        <end position="122"/>
    </location>
</feature>
<feature type="strand" evidence="19">
    <location>
        <begin position="127"/>
        <end position="130"/>
    </location>
</feature>
<feature type="strand" evidence="19">
    <location>
        <begin position="137"/>
        <end position="141"/>
    </location>
</feature>
<feature type="strand" evidence="19">
    <location>
        <begin position="144"/>
        <end position="147"/>
    </location>
</feature>
<feature type="helix" evidence="19">
    <location>
        <begin position="148"/>
        <end position="153"/>
    </location>
</feature>
<feature type="helix" evidence="19">
    <location>
        <begin position="155"/>
        <end position="158"/>
    </location>
</feature>
<feature type="helix" evidence="19">
    <location>
        <begin position="164"/>
        <end position="166"/>
    </location>
</feature>
<feature type="helix" evidence="19">
    <location>
        <begin position="171"/>
        <end position="178"/>
    </location>
</feature>
<feature type="helix" evidence="19">
    <location>
        <begin position="180"/>
        <end position="188"/>
    </location>
</feature>
<feature type="helix" evidence="19">
    <location>
        <begin position="191"/>
        <end position="198"/>
    </location>
</feature>
<feature type="strand" evidence="18">
    <location>
        <begin position="200"/>
        <end position="202"/>
    </location>
</feature>
<feature type="helix" evidence="19">
    <location>
        <begin position="203"/>
        <end position="209"/>
    </location>
</feature>
<feature type="helix" evidence="19">
    <location>
        <begin position="215"/>
        <end position="224"/>
    </location>
</feature>
<feature type="helix" evidence="19">
    <location>
        <begin position="228"/>
        <end position="230"/>
    </location>
</feature>
<feature type="helix" evidence="19">
    <location>
        <begin position="235"/>
        <end position="245"/>
    </location>
</feature>
<feature type="strand" evidence="19">
    <location>
        <begin position="251"/>
        <end position="254"/>
    </location>
</feature>
<feature type="helix" evidence="19">
    <location>
        <begin position="260"/>
        <end position="268"/>
    </location>
</feature>
<feature type="helix" evidence="19">
    <location>
        <begin position="269"/>
        <end position="272"/>
    </location>
</feature>
<feature type="strand" evidence="19">
    <location>
        <begin position="273"/>
        <end position="276"/>
    </location>
</feature>
<feature type="strand" evidence="19">
    <location>
        <begin position="278"/>
        <end position="284"/>
    </location>
</feature>
<feature type="strand" evidence="19">
    <location>
        <begin position="289"/>
        <end position="294"/>
    </location>
</feature>
<feature type="strand" evidence="19">
    <location>
        <begin position="296"/>
        <end position="298"/>
    </location>
</feature>
<feature type="strand" evidence="19">
    <location>
        <begin position="302"/>
        <end position="310"/>
    </location>
</feature>
<feature type="helix" evidence="19">
    <location>
        <begin position="314"/>
        <end position="317"/>
    </location>
</feature>
<feature type="strand" evidence="19">
    <location>
        <begin position="320"/>
        <end position="324"/>
    </location>
</feature>
<feature type="helix" evidence="19">
    <location>
        <begin position="328"/>
        <end position="336"/>
    </location>
</feature>
<feature type="strand" evidence="19">
    <location>
        <begin position="342"/>
        <end position="351"/>
    </location>
</feature>
<feature type="helix" evidence="19">
    <location>
        <begin position="353"/>
        <end position="357"/>
    </location>
</feature>
<feature type="strand" evidence="19">
    <location>
        <begin position="361"/>
        <end position="368"/>
    </location>
</feature>
<feature type="strand" evidence="19">
    <location>
        <begin position="372"/>
        <end position="374"/>
    </location>
</feature>
<feature type="strand" evidence="19">
    <location>
        <begin position="385"/>
        <end position="392"/>
    </location>
</feature>
<feature type="helix" evidence="19">
    <location>
        <begin position="393"/>
        <end position="397"/>
    </location>
</feature>
<feature type="turn" evidence="19">
    <location>
        <begin position="398"/>
        <end position="401"/>
    </location>
</feature>
<feature type="helix" evidence="19">
    <location>
        <begin position="404"/>
        <end position="419"/>
    </location>
</feature>
<feature type="helix" evidence="19">
    <location>
        <begin position="423"/>
        <end position="429"/>
    </location>
</feature>
<feature type="strand" evidence="19">
    <location>
        <begin position="430"/>
        <end position="437"/>
    </location>
</feature>
<feature type="helix" evidence="19">
    <location>
        <begin position="438"/>
        <end position="440"/>
    </location>
</feature>
<feature type="turn" evidence="19">
    <location>
        <begin position="442"/>
        <end position="444"/>
    </location>
</feature>
<feature type="strand" evidence="19">
    <location>
        <begin position="446"/>
        <end position="449"/>
    </location>
</feature>
<feature type="helix" evidence="19">
    <location>
        <begin position="455"/>
        <end position="464"/>
    </location>
</feature>
<feature type="strand" evidence="19">
    <location>
        <begin position="470"/>
        <end position="472"/>
    </location>
</feature>
<feature type="helix" evidence="19">
    <location>
        <begin position="475"/>
        <end position="477"/>
    </location>
</feature>
<feature type="strand" evidence="19">
    <location>
        <begin position="478"/>
        <end position="482"/>
    </location>
</feature>
<feature type="helix" evidence="19">
    <location>
        <begin position="484"/>
        <end position="503"/>
    </location>
</feature>
<proteinExistence type="evidence at protein level"/>
<organism>
    <name type="scientific">Calloselasma rhodostoma</name>
    <name type="common">Malayan pit viper</name>
    <name type="synonym">Agkistrodon rhodostoma</name>
    <dbReference type="NCBI Taxonomy" id="8717"/>
    <lineage>
        <taxon>Eukaryota</taxon>
        <taxon>Metazoa</taxon>
        <taxon>Chordata</taxon>
        <taxon>Craniata</taxon>
        <taxon>Vertebrata</taxon>
        <taxon>Euteleostomi</taxon>
        <taxon>Lepidosauria</taxon>
        <taxon>Squamata</taxon>
        <taxon>Bifurcata</taxon>
        <taxon>Unidentata</taxon>
        <taxon>Episquamata</taxon>
        <taxon>Toxicofera</taxon>
        <taxon>Serpentes</taxon>
        <taxon>Colubroidea</taxon>
        <taxon>Viperidae</taxon>
        <taxon>Crotalinae</taxon>
        <taxon>Calloselasma</taxon>
    </lineage>
</organism>